<feature type="chain" id="PRO_1000124685" description="3-phosphoshikimate 1-carboxyvinyltransferase">
    <location>
        <begin position="1"/>
        <end position="427"/>
    </location>
</feature>
<feature type="active site" description="Proton acceptor" evidence="1">
    <location>
        <position position="313"/>
    </location>
</feature>
<feature type="binding site" evidence="1">
    <location>
        <position position="22"/>
    </location>
    <ligand>
        <name>3-phosphoshikimate</name>
        <dbReference type="ChEBI" id="CHEBI:145989"/>
    </ligand>
</feature>
<feature type="binding site" evidence="1">
    <location>
        <position position="22"/>
    </location>
    <ligand>
        <name>phosphoenolpyruvate</name>
        <dbReference type="ChEBI" id="CHEBI:58702"/>
    </ligand>
</feature>
<feature type="binding site" evidence="1">
    <location>
        <position position="23"/>
    </location>
    <ligand>
        <name>3-phosphoshikimate</name>
        <dbReference type="ChEBI" id="CHEBI:145989"/>
    </ligand>
</feature>
<feature type="binding site" evidence="1">
    <location>
        <position position="27"/>
    </location>
    <ligand>
        <name>3-phosphoshikimate</name>
        <dbReference type="ChEBI" id="CHEBI:145989"/>
    </ligand>
</feature>
<feature type="binding site" evidence="1">
    <location>
        <position position="96"/>
    </location>
    <ligand>
        <name>phosphoenolpyruvate</name>
        <dbReference type="ChEBI" id="CHEBI:58702"/>
    </ligand>
</feature>
<feature type="binding site" evidence="1">
    <location>
        <position position="124"/>
    </location>
    <ligand>
        <name>phosphoenolpyruvate</name>
        <dbReference type="ChEBI" id="CHEBI:58702"/>
    </ligand>
</feature>
<feature type="binding site" evidence="1">
    <location>
        <position position="169"/>
    </location>
    <ligand>
        <name>3-phosphoshikimate</name>
        <dbReference type="ChEBI" id="CHEBI:145989"/>
    </ligand>
</feature>
<feature type="binding site" evidence="1">
    <location>
        <position position="170"/>
    </location>
    <ligand>
        <name>3-phosphoshikimate</name>
        <dbReference type="ChEBI" id="CHEBI:145989"/>
    </ligand>
</feature>
<feature type="binding site" evidence="1">
    <location>
        <position position="171"/>
    </location>
    <ligand>
        <name>3-phosphoshikimate</name>
        <dbReference type="ChEBI" id="CHEBI:145989"/>
    </ligand>
</feature>
<feature type="binding site" evidence="1">
    <location>
        <position position="171"/>
    </location>
    <ligand>
        <name>phosphoenolpyruvate</name>
        <dbReference type="ChEBI" id="CHEBI:58702"/>
    </ligand>
</feature>
<feature type="binding site" evidence="1">
    <location>
        <position position="197"/>
    </location>
    <ligand>
        <name>3-phosphoshikimate</name>
        <dbReference type="ChEBI" id="CHEBI:145989"/>
    </ligand>
</feature>
<feature type="binding site" evidence="1">
    <location>
        <position position="313"/>
    </location>
    <ligand>
        <name>3-phosphoshikimate</name>
        <dbReference type="ChEBI" id="CHEBI:145989"/>
    </ligand>
</feature>
<feature type="binding site" evidence="1">
    <location>
        <position position="336"/>
    </location>
    <ligand>
        <name>3-phosphoshikimate</name>
        <dbReference type="ChEBI" id="CHEBI:145989"/>
    </ligand>
</feature>
<feature type="binding site" evidence="1">
    <location>
        <position position="340"/>
    </location>
    <ligand>
        <name>3-phosphoshikimate</name>
        <dbReference type="ChEBI" id="CHEBI:145989"/>
    </ligand>
</feature>
<feature type="binding site" evidence="1">
    <location>
        <position position="344"/>
    </location>
    <ligand>
        <name>phosphoenolpyruvate</name>
        <dbReference type="ChEBI" id="CHEBI:58702"/>
    </ligand>
</feature>
<feature type="binding site" evidence="1">
    <location>
        <position position="386"/>
    </location>
    <ligand>
        <name>phosphoenolpyruvate</name>
        <dbReference type="ChEBI" id="CHEBI:58702"/>
    </ligand>
</feature>
<feature type="binding site" evidence="1">
    <location>
        <position position="411"/>
    </location>
    <ligand>
        <name>phosphoenolpyruvate</name>
        <dbReference type="ChEBI" id="CHEBI:58702"/>
    </ligand>
</feature>
<organism>
    <name type="scientific">Escherichia coli O127:H6 (strain E2348/69 / EPEC)</name>
    <dbReference type="NCBI Taxonomy" id="574521"/>
    <lineage>
        <taxon>Bacteria</taxon>
        <taxon>Pseudomonadati</taxon>
        <taxon>Pseudomonadota</taxon>
        <taxon>Gammaproteobacteria</taxon>
        <taxon>Enterobacterales</taxon>
        <taxon>Enterobacteriaceae</taxon>
        <taxon>Escherichia</taxon>
    </lineage>
</organism>
<reference key="1">
    <citation type="journal article" date="2009" name="J. Bacteriol.">
        <title>Complete genome sequence and comparative genome analysis of enteropathogenic Escherichia coli O127:H6 strain E2348/69.</title>
        <authorList>
            <person name="Iguchi A."/>
            <person name="Thomson N.R."/>
            <person name="Ogura Y."/>
            <person name="Saunders D."/>
            <person name="Ooka T."/>
            <person name="Henderson I.R."/>
            <person name="Harris D."/>
            <person name="Asadulghani M."/>
            <person name="Kurokawa K."/>
            <person name="Dean P."/>
            <person name="Kenny B."/>
            <person name="Quail M.A."/>
            <person name="Thurston S."/>
            <person name="Dougan G."/>
            <person name="Hayashi T."/>
            <person name="Parkhill J."/>
            <person name="Frankel G."/>
        </authorList>
    </citation>
    <scope>NUCLEOTIDE SEQUENCE [LARGE SCALE GENOMIC DNA]</scope>
    <source>
        <strain>E2348/69 / EPEC</strain>
    </source>
</reference>
<comment type="function">
    <text evidence="1">Catalyzes the transfer of the enolpyruvyl moiety of phosphoenolpyruvate (PEP) to the 5-hydroxyl of shikimate-3-phosphate (S3P) to produce enolpyruvyl shikimate-3-phosphate and inorganic phosphate.</text>
</comment>
<comment type="catalytic activity">
    <reaction evidence="1">
        <text>3-phosphoshikimate + phosphoenolpyruvate = 5-O-(1-carboxyvinyl)-3-phosphoshikimate + phosphate</text>
        <dbReference type="Rhea" id="RHEA:21256"/>
        <dbReference type="ChEBI" id="CHEBI:43474"/>
        <dbReference type="ChEBI" id="CHEBI:57701"/>
        <dbReference type="ChEBI" id="CHEBI:58702"/>
        <dbReference type="ChEBI" id="CHEBI:145989"/>
        <dbReference type="EC" id="2.5.1.19"/>
    </reaction>
    <physiologicalReaction direction="left-to-right" evidence="1">
        <dbReference type="Rhea" id="RHEA:21257"/>
    </physiologicalReaction>
</comment>
<comment type="pathway">
    <text evidence="1">Metabolic intermediate biosynthesis; chorismate biosynthesis; chorismate from D-erythrose 4-phosphate and phosphoenolpyruvate: step 6/7.</text>
</comment>
<comment type="subunit">
    <text evidence="1">Monomer.</text>
</comment>
<comment type="subcellular location">
    <subcellularLocation>
        <location evidence="1">Cytoplasm</location>
    </subcellularLocation>
</comment>
<comment type="similarity">
    <text evidence="1">Belongs to the EPSP synthase family.</text>
</comment>
<keyword id="KW-0028">Amino-acid biosynthesis</keyword>
<keyword id="KW-0057">Aromatic amino acid biosynthesis</keyword>
<keyword id="KW-0963">Cytoplasm</keyword>
<keyword id="KW-1185">Reference proteome</keyword>
<keyword id="KW-0808">Transferase</keyword>
<protein>
    <recommendedName>
        <fullName evidence="1">3-phosphoshikimate 1-carboxyvinyltransferase</fullName>
        <ecNumber evidence="1">2.5.1.19</ecNumber>
    </recommendedName>
    <alternativeName>
        <fullName evidence="1">5-enolpyruvylshikimate-3-phosphate synthase</fullName>
        <shortName evidence="1">EPSP synthase</shortName>
        <shortName evidence="1">EPSPS</shortName>
    </alternativeName>
</protein>
<sequence>MESLTLQPIARVDGTINLPGSKSVSNRALLLAALAHGKTVLTNLLDSDDVRHMLNALTALGVSYTLSADRTRCEIIGNGGPLHAKSALELFLGNAGTAMRPLAAALCLGSNDIVLTGEPRMKERPIGHLVDALRLGGAKITYLEQENYPPLRLQGGFTGGNVDVDGSVSSQFLTALLMTAPLAPEDTVIRIKGDLVSKPYIDITLNLMKTFGVEIENQHYQQFVVKGGQSYQSPGTYLVEGDASSASYFLAAAAIKGGTVKVTGIGRNSMQGDIRFADVLEKMGATICWGDDYISCMRGELNAIDMDMNHIPDAAMTIATAALFAKGTTTLRNIYNWRVKETDRLFAMATELRKVGAEVEEGHDFIRITPPEKLKFAEIATYNDHRMAMCFSLVALSDTAVTILDPKCTAKTFPDYFEQLARISQSG</sequence>
<evidence type="ECO:0000255" key="1">
    <source>
        <dbReference type="HAMAP-Rule" id="MF_00210"/>
    </source>
</evidence>
<gene>
    <name evidence="1" type="primary">aroA</name>
    <name type="ordered locus">E2348C_0901</name>
</gene>
<accession>B7UMZ4</accession>
<name>AROA_ECO27</name>
<proteinExistence type="inferred from homology"/>
<dbReference type="EC" id="2.5.1.19" evidence="1"/>
<dbReference type="EMBL" id="FM180568">
    <property type="protein sequence ID" value="CAS08449.1"/>
    <property type="molecule type" value="Genomic_DNA"/>
</dbReference>
<dbReference type="RefSeq" id="WP_000445245.1">
    <property type="nucleotide sequence ID" value="NC_011601.1"/>
</dbReference>
<dbReference type="SMR" id="B7UMZ4"/>
<dbReference type="KEGG" id="ecg:E2348C_0901"/>
<dbReference type="HOGENOM" id="CLU_024321_0_0_6"/>
<dbReference type="UniPathway" id="UPA00053">
    <property type="reaction ID" value="UER00089"/>
</dbReference>
<dbReference type="Proteomes" id="UP000008205">
    <property type="component" value="Chromosome"/>
</dbReference>
<dbReference type="GO" id="GO:0005737">
    <property type="term" value="C:cytoplasm"/>
    <property type="evidence" value="ECO:0007669"/>
    <property type="project" value="UniProtKB-SubCell"/>
</dbReference>
<dbReference type="GO" id="GO:0003866">
    <property type="term" value="F:3-phosphoshikimate 1-carboxyvinyltransferase activity"/>
    <property type="evidence" value="ECO:0007669"/>
    <property type="project" value="UniProtKB-UniRule"/>
</dbReference>
<dbReference type="GO" id="GO:0008652">
    <property type="term" value="P:amino acid biosynthetic process"/>
    <property type="evidence" value="ECO:0007669"/>
    <property type="project" value="UniProtKB-KW"/>
</dbReference>
<dbReference type="GO" id="GO:0009073">
    <property type="term" value="P:aromatic amino acid family biosynthetic process"/>
    <property type="evidence" value="ECO:0007669"/>
    <property type="project" value="UniProtKB-KW"/>
</dbReference>
<dbReference type="GO" id="GO:0009423">
    <property type="term" value="P:chorismate biosynthetic process"/>
    <property type="evidence" value="ECO:0007669"/>
    <property type="project" value="UniProtKB-UniRule"/>
</dbReference>
<dbReference type="CDD" id="cd01554">
    <property type="entry name" value="EPT-like"/>
    <property type="match status" value="1"/>
</dbReference>
<dbReference type="FunFam" id="3.65.10.10:FF:000003">
    <property type="entry name" value="3-phosphoshikimate 1-carboxyvinyltransferase"/>
    <property type="match status" value="1"/>
</dbReference>
<dbReference type="FunFam" id="3.65.10.10:FF:000004">
    <property type="entry name" value="3-phosphoshikimate 1-carboxyvinyltransferase"/>
    <property type="match status" value="1"/>
</dbReference>
<dbReference type="Gene3D" id="3.65.10.10">
    <property type="entry name" value="Enolpyruvate transferase domain"/>
    <property type="match status" value="2"/>
</dbReference>
<dbReference type="HAMAP" id="MF_00210">
    <property type="entry name" value="EPSP_synth"/>
    <property type="match status" value="1"/>
</dbReference>
<dbReference type="InterPro" id="IPR001986">
    <property type="entry name" value="Enolpyruvate_Tfrase_dom"/>
</dbReference>
<dbReference type="InterPro" id="IPR036968">
    <property type="entry name" value="Enolpyruvate_Tfrase_sf"/>
</dbReference>
<dbReference type="InterPro" id="IPR006264">
    <property type="entry name" value="EPSP_synthase"/>
</dbReference>
<dbReference type="InterPro" id="IPR023193">
    <property type="entry name" value="EPSP_synthase_CS"/>
</dbReference>
<dbReference type="InterPro" id="IPR013792">
    <property type="entry name" value="RNA3'P_cycl/enolpyr_Trfase_a/b"/>
</dbReference>
<dbReference type="NCBIfam" id="TIGR01356">
    <property type="entry name" value="aroA"/>
    <property type="match status" value="1"/>
</dbReference>
<dbReference type="PANTHER" id="PTHR21090">
    <property type="entry name" value="AROM/DEHYDROQUINATE SYNTHASE"/>
    <property type="match status" value="1"/>
</dbReference>
<dbReference type="PANTHER" id="PTHR21090:SF5">
    <property type="entry name" value="PENTAFUNCTIONAL AROM POLYPEPTIDE"/>
    <property type="match status" value="1"/>
</dbReference>
<dbReference type="Pfam" id="PF00275">
    <property type="entry name" value="EPSP_synthase"/>
    <property type="match status" value="1"/>
</dbReference>
<dbReference type="PIRSF" id="PIRSF000505">
    <property type="entry name" value="EPSPS"/>
    <property type="match status" value="1"/>
</dbReference>
<dbReference type="SUPFAM" id="SSF55205">
    <property type="entry name" value="EPT/RTPC-like"/>
    <property type="match status" value="1"/>
</dbReference>
<dbReference type="PROSITE" id="PS00104">
    <property type="entry name" value="EPSP_SYNTHASE_1"/>
    <property type="match status" value="1"/>
</dbReference>
<dbReference type="PROSITE" id="PS00885">
    <property type="entry name" value="EPSP_SYNTHASE_2"/>
    <property type="match status" value="1"/>
</dbReference>